<name>RLA0L_HUMAN</name>
<comment type="function">
    <text evidence="1">Ribosomal protein P0 is the functional equivalent of E.coli protein L10.</text>
</comment>
<comment type="subunit">
    <text evidence="1">P0 forms a pentameric complex by interaction with dimers of P1 and P2.</text>
</comment>
<comment type="similarity">
    <text evidence="5">Belongs to the universal ribosomal protein uL10 family.</text>
</comment>
<comment type="caution">
    <text evidence="5">Could be the product of a pseudogene.</text>
</comment>
<sequence length="317" mass="34364">MPREDRATWKSNYFLKIIQLLDDYPKCFIVGADNVGSKQMQQIRMSLRGKVVVLMGKNTMMRKAIRGHLENNPALEKLLPHIWGNVGFVFTKEDLTEIRDMLLANKVPAAARAGAIAPCEVTVPAQNTGLGPEKTSFFQALGITTKISRGTIEILSDVQLIKTGDKVGASEATLLNMLNISPFSFGLVIQQVFDNGSIYNPEVLDKTEETLHSRFLEGVRNVASVCLQTGYPTVASVPHSIINGYKRVLALSVETDYTFPLAENVKAFLADPSAFVAAAPVAADTTAAPAAAAAPAKVEAKEESEESDEDMGFGLFD</sequence>
<evidence type="ECO:0000250" key="1"/>
<evidence type="ECO:0000250" key="2">
    <source>
        <dbReference type="UniProtKB" id="P05388"/>
    </source>
</evidence>
<evidence type="ECO:0000250" key="3">
    <source>
        <dbReference type="UniProtKB" id="P14869"/>
    </source>
</evidence>
<evidence type="ECO:0000256" key="4">
    <source>
        <dbReference type="SAM" id="MobiDB-lite"/>
    </source>
</evidence>
<evidence type="ECO:0000305" key="5"/>
<proteinExistence type="uncertain"/>
<feature type="chain" id="PRO_0000349111" description="Putative ribosomal protein uL10-like">
    <location>
        <begin position="1"/>
        <end position="317"/>
    </location>
</feature>
<feature type="region of interest" description="Disordered" evidence="4">
    <location>
        <begin position="292"/>
        <end position="317"/>
    </location>
</feature>
<feature type="compositionally biased region" description="Acidic residues" evidence="4">
    <location>
        <begin position="302"/>
        <end position="311"/>
    </location>
</feature>
<feature type="modified residue" description="Phosphotyrosine" evidence="3">
    <location>
        <position position="24"/>
    </location>
</feature>
<feature type="modified residue" description="Phosphothreonine" evidence="2">
    <location>
        <position position="59"/>
    </location>
</feature>
<feature type="modified residue" description="Phosphoserine" evidence="2">
    <location>
        <position position="304"/>
    </location>
</feature>
<feature type="modified residue" description="Phosphoserine" evidence="2">
    <location>
        <position position="307"/>
    </location>
</feature>
<feature type="cross-link" description="Glycyl lysine isopeptide (Lys-Gly) (interchain with G-Cter in SUMO1); alternate" evidence="2">
    <location>
        <position position="297"/>
    </location>
</feature>
<feature type="cross-link" description="Glycyl lysine isopeptide (Lys-Gly) (interchain with G-Cter in SUMO2); alternate" evidence="2">
    <location>
        <position position="297"/>
    </location>
</feature>
<accession>Q8NHW5</accession>
<dbReference type="EMBL" id="AY064377">
    <property type="protein sequence ID" value="AAL62450.1"/>
    <property type="molecule type" value="Genomic_DNA"/>
</dbReference>
<dbReference type="EMBL" id="CR596098">
    <property type="status" value="NOT_ANNOTATED_CDS"/>
    <property type="molecule type" value="mRNA"/>
</dbReference>
<dbReference type="EMBL" id="CH471053">
    <property type="protein sequence ID" value="EAX00373.1"/>
    <property type="molecule type" value="Genomic_DNA"/>
</dbReference>
<dbReference type="SMR" id="Q8NHW5"/>
<dbReference type="FunCoup" id="Q8NHW5">
    <property type="interactions" value="429"/>
</dbReference>
<dbReference type="IntAct" id="Q8NHW5">
    <property type="interactions" value="12"/>
</dbReference>
<dbReference type="MINT" id="Q8NHW5"/>
<dbReference type="GlyGen" id="Q8NHW5">
    <property type="glycosylation" value="1 site, 1 O-linked glycan (1 site)"/>
</dbReference>
<dbReference type="iPTMnet" id="Q8NHW5"/>
<dbReference type="MetOSite" id="Q8NHW5"/>
<dbReference type="PhosphoSitePlus" id="Q8NHW5"/>
<dbReference type="SwissPalm" id="Q8NHW5"/>
<dbReference type="BioMuta" id="HGNC:36404"/>
<dbReference type="DMDM" id="74723863"/>
<dbReference type="jPOST" id="Q8NHW5"/>
<dbReference type="MassIVE" id="Q8NHW5"/>
<dbReference type="ProteomicsDB" id="73779"/>
<dbReference type="Pumba" id="Q8NHW5"/>
<dbReference type="TopDownProteomics" id="Q8NHW5"/>
<dbReference type="AGR" id="HGNC:36404"/>
<dbReference type="GeneCards" id="RPLP0P6"/>
<dbReference type="HGNC" id="HGNC:36404">
    <property type="gene designation" value="RPLP0P6"/>
</dbReference>
<dbReference type="neXtProt" id="NX_Q8NHW5"/>
<dbReference type="InParanoid" id="Q8NHW5"/>
<dbReference type="PAN-GO" id="Q8NHW5">
    <property type="GO annotations" value="5 GO annotations based on evolutionary models"/>
</dbReference>
<dbReference type="PathwayCommons" id="Q8NHW5"/>
<dbReference type="SignaLink" id="Q8NHW5"/>
<dbReference type="ChiTaRS" id="RPLP0P6">
    <property type="organism name" value="human"/>
</dbReference>
<dbReference type="Pharos" id="Q8NHW5">
    <property type="development level" value="Tdark"/>
</dbReference>
<dbReference type="Proteomes" id="UP000005640">
    <property type="component" value="Unplaced"/>
</dbReference>
<dbReference type="RNAct" id="Q8NHW5">
    <property type="molecule type" value="protein"/>
</dbReference>
<dbReference type="GO" id="GO:0022625">
    <property type="term" value="C:cytosolic large ribosomal subunit"/>
    <property type="evidence" value="ECO:0000318"/>
    <property type="project" value="GO_Central"/>
</dbReference>
<dbReference type="GO" id="GO:0070180">
    <property type="term" value="F:large ribosomal subunit rRNA binding"/>
    <property type="evidence" value="ECO:0000318"/>
    <property type="project" value="GO_Central"/>
</dbReference>
<dbReference type="GO" id="GO:0003735">
    <property type="term" value="F:structural constituent of ribosome"/>
    <property type="evidence" value="ECO:0000318"/>
    <property type="project" value="GO_Central"/>
</dbReference>
<dbReference type="GO" id="GO:0002181">
    <property type="term" value="P:cytoplasmic translation"/>
    <property type="evidence" value="ECO:0000318"/>
    <property type="project" value="GO_Central"/>
</dbReference>
<dbReference type="GO" id="GO:0042254">
    <property type="term" value="P:ribosome biogenesis"/>
    <property type="evidence" value="ECO:0007669"/>
    <property type="project" value="InterPro"/>
</dbReference>
<dbReference type="CDD" id="cd05795">
    <property type="entry name" value="Ribosomal_P0_L10e"/>
    <property type="match status" value="1"/>
</dbReference>
<dbReference type="FunFam" id="3.30.70.1730:FF:000002">
    <property type="entry name" value="60S acidic ribosomal protein P0"/>
    <property type="match status" value="1"/>
</dbReference>
<dbReference type="FunFam" id="3.90.105.20:FF:000001">
    <property type="entry name" value="60S acidic ribosomal protein P0"/>
    <property type="match status" value="1"/>
</dbReference>
<dbReference type="Gene3D" id="3.30.70.1730">
    <property type="match status" value="1"/>
</dbReference>
<dbReference type="Gene3D" id="3.90.105.20">
    <property type="match status" value="1"/>
</dbReference>
<dbReference type="InterPro" id="IPR050323">
    <property type="entry name" value="Ribosomal_protein_uL10"/>
</dbReference>
<dbReference type="InterPro" id="IPR001790">
    <property type="entry name" value="Ribosomal_uL10"/>
</dbReference>
<dbReference type="InterPro" id="IPR040637">
    <property type="entry name" value="Ribosomal_uL10-like_insert"/>
</dbReference>
<dbReference type="InterPro" id="IPR043164">
    <property type="entry name" value="Ribosomal_uL10-like_insert_sf"/>
</dbReference>
<dbReference type="InterPro" id="IPR043141">
    <property type="entry name" value="Ribosomal_uL10-like_sf"/>
</dbReference>
<dbReference type="InterPro" id="IPR030670">
    <property type="entry name" value="uL10_eukaryotes"/>
</dbReference>
<dbReference type="PANTHER" id="PTHR45699">
    <property type="entry name" value="60S ACIDIC RIBOSOMAL PROTEIN P0"/>
    <property type="match status" value="1"/>
</dbReference>
<dbReference type="PANTHER" id="PTHR45699:SF1">
    <property type="entry name" value="LARGE RIBOSOMAL SUBUNIT PROTEIN UL10-RELATED"/>
    <property type="match status" value="1"/>
</dbReference>
<dbReference type="Pfam" id="PF00428">
    <property type="entry name" value="Ribosomal_60s"/>
    <property type="match status" value="1"/>
</dbReference>
<dbReference type="Pfam" id="PF00466">
    <property type="entry name" value="Ribosomal_L10"/>
    <property type="match status" value="1"/>
</dbReference>
<dbReference type="Pfam" id="PF17777">
    <property type="entry name" value="RL10P_insert"/>
    <property type="match status" value="1"/>
</dbReference>
<dbReference type="PIRSF" id="PIRSF039087">
    <property type="entry name" value="L10E"/>
    <property type="match status" value="1"/>
</dbReference>
<dbReference type="SUPFAM" id="SSF160369">
    <property type="entry name" value="Ribosomal protein L10-like"/>
    <property type="match status" value="1"/>
</dbReference>
<protein>
    <recommendedName>
        <fullName evidence="5">Putative ribosomal protein uL10-like</fullName>
    </recommendedName>
    <alternativeName>
        <fullName>60S acidic ribosomal protein P0-like</fullName>
    </alternativeName>
    <alternativeName>
        <fullName>Large ribosomal subunit protein uL10-like</fullName>
    </alternativeName>
</protein>
<keyword id="KW-1017">Isopeptide bond</keyword>
<keyword id="KW-0597">Phosphoprotein</keyword>
<keyword id="KW-1267">Proteomics identification</keyword>
<keyword id="KW-1185">Reference proteome</keyword>
<keyword id="KW-0687">Ribonucleoprotein</keyword>
<keyword id="KW-0689">Ribosomal protein</keyword>
<keyword id="KW-0832">Ubl conjugation</keyword>
<reference key="1">
    <citation type="submission" date="2001-11" db="EMBL/GenBank/DDBJ databases">
        <title>Physical/genetic map of the 2p22-2p21 region on chromosome 2.</title>
        <authorList>
            <person name="Gorry M.C."/>
            <person name="Zhang Y."/>
            <person name="Marks J.J."/>
            <person name="Suppe B."/>
            <person name="Hart P.S."/>
            <person name="Corteli J.R."/>
            <person name="Pallos D."/>
            <person name="Hart T.C."/>
        </authorList>
    </citation>
    <scope>NUCLEOTIDE SEQUENCE [GENOMIC DNA]</scope>
</reference>
<reference key="2">
    <citation type="submission" date="2004-07" db="EMBL/GenBank/DDBJ databases">
        <title>Full-length cDNA libraries and normalization.</title>
        <authorList>
            <person name="Li W.B."/>
            <person name="Gruber C."/>
            <person name="Jessee J."/>
            <person name="Polayes D."/>
        </authorList>
    </citation>
    <scope>NUCLEOTIDE SEQUENCE [LARGE SCALE MRNA]</scope>
    <source>
        <tissue>Cervix carcinoma</tissue>
    </source>
</reference>
<reference key="3">
    <citation type="submission" date="2005-09" db="EMBL/GenBank/DDBJ databases">
        <authorList>
            <person name="Mural R.J."/>
            <person name="Istrail S."/>
            <person name="Sutton G.G."/>
            <person name="Florea L."/>
            <person name="Halpern A.L."/>
            <person name="Mobarry C.M."/>
            <person name="Lippert R."/>
            <person name="Walenz B."/>
            <person name="Shatkay H."/>
            <person name="Dew I."/>
            <person name="Miller J.R."/>
            <person name="Flanigan M.J."/>
            <person name="Edwards N.J."/>
            <person name="Bolanos R."/>
            <person name="Fasulo D."/>
            <person name="Halldorsson B.V."/>
            <person name="Hannenhalli S."/>
            <person name="Turner R."/>
            <person name="Yooseph S."/>
            <person name="Lu F."/>
            <person name="Nusskern D.R."/>
            <person name="Shue B.C."/>
            <person name="Zheng X.H."/>
            <person name="Zhong F."/>
            <person name="Delcher A.L."/>
            <person name="Huson D.H."/>
            <person name="Kravitz S.A."/>
            <person name="Mouchard L."/>
            <person name="Reinert K."/>
            <person name="Remington K.A."/>
            <person name="Clark A.G."/>
            <person name="Waterman M.S."/>
            <person name="Eichler E.E."/>
            <person name="Adams M.D."/>
            <person name="Hunkapiller M.W."/>
            <person name="Myers E.W."/>
            <person name="Venter J.C."/>
        </authorList>
    </citation>
    <scope>NUCLEOTIDE SEQUENCE [LARGE SCALE GENOMIC DNA]</scope>
</reference>
<gene>
    <name type="primary">RPLP0P6</name>
</gene>
<organism>
    <name type="scientific">Homo sapiens</name>
    <name type="common">Human</name>
    <dbReference type="NCBI Taxonomy" id="9606"/>
    <lineage>
        <taxon>Eukaryota</taxon>
        <taxon>Metazoa</taxon>
        <taxon>Chordata</taxon>
        <taxon>Craniata</taxon>
        <taxon>Vertebrata</taxon>
        <taxon>Euteleostomi</taxon>
        <taxon>Mammalia</taxon>
        <taxon>Eutheria</taxon>
        <taxon>Euarchontoglires</taxon>
        <taxon>Primates</taxon>
        <taxon>Haplorrhini</taxon>
        <taxon>Catarrhini</taxon>
        <taxon>Hominidae</taxon>
        <taxon>Homo</taxon>
    </lineage>
</organism>